<comment type="function">
    <text evidence="1">Fluoride-specific ion channel. Important for reducing fluoride concentration in the cell, thus reducing its toxicity.</text>
</comment>
<comment type="catalytic activity">
    <reaction evidence="1">
        <text>fluoride(in) = fluoride(out)</text>
        <dbReference type="Rhea" id="RHEA:76159"/>
        <dbReference type="ChEBI" id="CHEBI:17051"/>
    </reaction>
    <physiologicalReaction direction="left-to-right" evidence="1">
        <dbReference type="Rhea" id="RHEA:76160"/>
    </physiologicalReaction>
</comment>
<comment type="activity regulation">
    <text evidence="1">Na(+) is not transported, but it plays an essential structural role and its presence is essential for fluoride channel function.</text>
</comment>
<comment type="subcellular location">
    <subcellularLocation>
        <location evidence="1">Cell inner membrane</location>
        <topology evidence="1">Multi-pass membrane protein</topology>
    </subcellularLocation>
</comment>
<comment type="similarity">
    <text evidence="1">Belongs to the fluoride channel Fluc/FEX (TC 1.A.43) family.</text>
</comment>
<proteinExistence type="inferred from homology"/>
<gene>
    <name evidence="1" type="primary">fluC</name>
    <name evidence="1" type="synonym">crcB</name>
    <name type="ordered locus">Rru_A0236</name>
</gene>
<keyword id="KW-0997">Cell inner membrane</keyword>
<keyword id="KW-1003">Cell membrane</keyword>
<keyword id="KW-0407">Ion channel</keyword>
<keyword id="KW-0406">Ion transport</keyword>
<keyword id="KW-0472">Membrane</keyword>
<keyword id="KW-0479">Metal-binding</keyword>
<keyword id="KW-1185">Reference proteome</keyword>
<keyword id="KW-0915">Sodium</keyword>
<keyword id="KW-0812">Transmembrane</keyword>
<keyword id="KW-1133">Transmembrane helix</keyword>
<keyword id="KW-0813">Transport</keyword>
<name>FLUC_RHORT</name>
<dbReference type="EMBL" id="CP000230">
    <property type="protein sequence ID" value="ABC21041.1"/>
    <property type="molecule type" value="Genomic_DNA"/>
</dbReference>
<dbReference type="RefSeq" id="WP_011387989.1">
    <property type="nucleotide sequence ID" value="NC_007643.1"/>
</dbReference>
<dbReference type="RefSeq" id="YP_425328.1">
    <property type="nucleotide sequence ID" value="NC_007643.1"/>
</dbReference>
<dbReference type="SMR" id="Q2RXV4"/>
<dbReference type="STRING" id="269796.Rru_A0236"/>
<dbReference type="EnsemblBacteria" id="ABC21041">
    <property type="protein sequence ID" value="ABC21041"/>
    <property type="gene ID" value="Rru_A0236"/>
</dbReference>
<dbReference type="KEGG" id="rru:Rru_A0236"/>
<dbReference type="PATRIC" id="fig|269796.9.peg.290"/>
<dbReference type="eggNOG" id="COG0239">
    <property type="taxonomic scope" value="Bacteria"/>
</dbReference>
<dbReference type="HOGENOM" id="CLU_114342_3_0_5"/>
<dbReference type="PhylomeDB" id="Q2RXV4"/>
<dbReference type="Proteomes" id="UP000001929">
    <property type="component" value="Chromosome"/>
</dbReference>
<dbReference type="GO" id="GO:0005886">
    <property type="term" value="C:plasma membrane"/>
    <property type="evidence" value="ECO:0007669"/>
    <property type="project" value="UniProtKB-SubCell"/>
</dbReference>
<dbReference type="GO" id="GO:0062054">
    <property type="term" value="F:fluoride channel activity"/>
    <property type="evidence" value="ECO:0007669"/>
    <property type="project" value="UniProtKB-UniRule"/>
</dbReference>
<dbReference type="GO" id="GO:0046872">
    <property type="term" value="F:metal ion binding"/>
    <property type="evidence" value="ECO:0007669"/>
    <property type="project" value="UniProtKB-KW"/>
</dbReference>
<dbReference type="GO" id="GO:0140114">
    <property type="term" value="P:cellular detoxification of fluoride"/>
    <property type="evidence" value="ECO:0007669"/>
    <property type="project" value="UniProtKB-UniRule"/>
</dbReference>
<dbReference type="HAMAP" id="MF_00454">
    <property type="entry name" value="FluC"/>
    <property type="match status" value="1"/>
</dbReference>
<dbReference type="InterPro" id="IPR003691">
    <property type="entry name" value="FluC"/>
</dbReference>
<dbReference type="NCBIfam" id="TIGR00494">
    <property type="entry name" value="crcB"/>
    <property type="match status" value="1"/>
</dbReference>
<dbReference type="NCBIfam" id="NF010802">
    <property type="entry name" value="PRK14206.1"/>
    <property type="match status" value="1"/>
</dbReference>
<dbReference type="PANTHER" id="PTHR28259">
    <property type="entry name" value="FLUORIDE EXPORT PROTEIN 1-RELATED"/>
    <property type="match status" value="1"/>
</dbReference>
<dbReference type="PANTHER" id="PTHR28259:SF1">
    <property type="entry name" value="FLUORIDE EXPORT PROTEIN 1-RELATED"/>
    <property type="match status" value="1"/>
</dbReference>
<dbReference type="Pfam" id="PF02537">
    <property type="entry name" value="CRCB"/>
    <property type="match status" value="1"/>
</dbReference>
<organism>
    <name type="scientific">Rhodospirillum rubrum (strain ATCC 11170 / ATH 1.1.1 / DSM 467 / LMG 4362 / NCIMB 8255 / S1)</name>
    <dbReference type="NCBI Taxonomy" id="269796"/>
    <lineage>
        <taxon>Bacteria</taxon>
        <taxon>Pseudomonadati</taxon>
        <taxon>Pseudomonadota</taxon>
        <taxon>Alphaproteobacteria</taxon>
        <taxon>Rhodospirillales</taxon>
        <taxon>Rhodospirillaceae</taxon>
        <taxon>Rhodospirillum</taxon>
    </lineage>
</organism>
<protein>
    <recommendedName>
        <fullName evidence="1">Fluoride-specific ion channel FluC</fullName>
    </recommendedName>
</protein>
<evidence type="ECO:0000255" key="1">
    <source>
        <dbReference type="HAMAP-Rule" id="MF_00454"/>
    </source>
</evidence>
<feature type="chain" id="PRO_0000252930" description="Fluoride-specific ion channel FluC">
    <location>
        <begin position="1"/>
        <end position="129"/>
    </location>
</feature>
<feature type="transmembrane region" description="Helical" evidence="1">
    <location>
        <begin position="4"/>
        <end position="24"/>
    </location>
</feature>
<feature type="transmembrane region" description="Helical" evidence="1">
    <location>
        <begin position="32"/>
        <end position="52"/>
    </location>
</feature>
<feature type="transmembrane region" description="Helical" evidence="1">
    <location>
        <begin position="69"/>
        <end position="89"/>
    </location>
</feature>
<feature type="transmembrane region" description="Helical" evidence="1">
    <location>
        <begin position="105"/>
        <end position="125"/>
    </location>
</feature>
<feature type="binding site" evidence="1">
    <location>
        <position position="76"/>
    </location>
    <ligand>
        <name>Na(+)</name>
        <dbReference type="ChEBI" id="CHEBI:29101"/>
        <note>structural</note>
    </ligand>
</feature>
<feature type="binding site" evidence="1">
    <location>
        <position position="79"/>
    </location>
    <ligand>
        <name>Na(+)</name>
        <dbReference type="ChEBI" id="CHEBI:29101"/>
        <note>structural</note>
    </ligand>
</feature>
<accession>Q2RXV4</accession>
<reference key="1">
    <citation type="journal article" date="2011" name="Stand. Genomic Sci.">
        <title>Complete genome sequence of Rhodospirillum rubrum type strain (S1).</title>
        <authorList>
            <person name="Munk A.C."/>
            <person name="Copeland A."/>
            <person name="Lucas S."/>
            <person name="Lapidus A."/>
            <person name="Del Rio T.G."/>
            <person name="Barry K."/>
            <person name="Detter J.C."/>
            <person name="Hammon N."/>
            <person name="Israni S."/>
            <person name="Pitluck S."/>
            <person name="Brettin T."/>
            <person name="Bruce D."/>
            <person name="Han C."/>
            <person name="Tapia R."/>
            <person name="Gilna P."/>
            <person name="Schmutz J."/>
            <person name="Larimer F."/>
            <person name="Land M."/>
            <person name="Kyrpides N.C."/>
            <person name="Mavromatis K."/>
            <person name="Richardson P."/>
            <person name="Rohde M."/>
            <person name="Goeker M."/>
            <person name="Klenk H.P."/>
            <person name="Zhang Y."/>
            <person name="Roberts G.P."/>
            <person name="Reslewic S."/>
            <person name="Schwartz D.C."/>
        </authorList>
    </citation>
    <scope>NUCLEOTIDE SEQUENCE [LARGE SCALE GENOMIC DNA]</scope>
    <source>
        <strain>ATCC 11170 / ATH 1.1.1 / DSM 467 / LMG 4362 / NCIMB 8255 / S1</strain>
    </source>
</reference>
<sequence length="129" mass="13449">MTYLFVAAGGALGSTLRYWLSGLIAGAIGQSFPWGTLVINISGSIVIGAFATLTGPDGRVFIPGDWRQFFMVGVCGGYTTFSSFSLQTLTLAQEGQGLWAAANVVLSVVFCLIGVWLGHVGAVLINEGV</sequence>